<organism>
    <name type="scientific">Neisseria gonorrhoeae (strain NCCP11945)</name>
    <dbReference type="NCBI Taxonomy" id="521006"/>
    <lineage>
        <taxon>Bacteria</taxon>
        <taxon>Pseudomonadati</taxon>
        <taxon>Pseudomonadota</taxon>
        <taxon>Betaproteobacteria</taxon>
        <taxon>Neisseriales</taxon>
        <taxon>Neisseriaceae</taxon>
        <taxon>Neisseria</taxon>
    </lineage>
</organism>
<dbReference type="EC" id="2.7.11.-" evidence="1"/>
<dbReference type="EC" id="2.7.4.-" evidence="1"/>
<dbReference type="EMBL" id="CP001050">
    <property type="protein sequence ID" value="ACF29153.1"/>
    <property type="molecule type" value="Genomic_DNA"/>
</dbReference>
<dbReference type="RefSeq" id="WP_003687702.1">
    <property type="nucleotide sequence ID" value="NC_011035.1"/>
</dbReference>
<dbReference type="SMR" id="B4RK02"/>
<dbReference type="GeneID" id="66752652"/>
<dbReference type="KEGG" id="ngk:NGK_0462"/>
<dbReference type="HOGENOM" id="CLU_052030_0_2_4"/>
<dbReference type="Proteomes" id="UP000002564">
    <property type="component" value="Chromosome"/>
</dbReference>
<dbReference type="GO" id="GO:0005524">
    <property type="term" value="F:ATP binding"/>
    <property type="evidence" value="ECO:0007669"/>
    <property type="project" value="UniProtKB-UniRule"/>
</dbReference>
<dbReference type="GO" id="GO:0000287">
    <property type="term" value="F:magnesium ion binding"/>
    <property type="evidence" value="ECO:0007669"/>
    <property type="project" value="UniProtKB-UniRule"/>
</dbReference>
<dbReference type="GO" id="GO:0000155">
    <property type="term" value="F:phosphorelay sensor kinase activity"/>
    <property type="evidence" value="ECO:0007669"/>
    <property type="project" value="InterPro"/>
</dbReference>
<dbReference type="GO" id="GO:0004674">
    <property type="term" value="F:protein serine/threonine kinase activity"/>
    <property type="evidence" value="ECO:0007669"/>
    <property type="project" value="UniProtKB-KW"/>
</dbReference>
<dbReference type="GO" id="GO:0004712">
    <property type="term" value="F:protein serine/threonine/tyrosine kinase activity"/>
    <property type="evidence" value="ECO:0007669"/>
    <property type="project" value="UniProtKB-UniRule"/>
</dbReference>
<dbReference type="GO" id="GO:0006109">
    <property type="term" value="P:regulation of carbohydrate metabolic process"/>
    <property type="evidence" value="ECO:0007669"/>
    <property type="project" value="UniProtKB-UniRule"/>
</dbReference>
<dbReference type="CDD" id="cd01918">
    <property type="entry name" value="HprK_C"/>
    <property type="match status" value="1"/>
</dbReference>
<dbReference type="FunFam" id="3.40.50.300:FF:000174">
    <property type="entry name" value="HPr kinase/phosphorylase"/>
    <property type="match status" value="1"/>
</dbReference>
<dbReference type="Gene3D" id="3.40.1390.20">
    <property type="entry name" value="HprK N-terminal domain-like"/>
    <property type="match status" value="1"/>
</dbReference>
<dbReference type="Gene3D" id="3.40.50.300">
    <property type="entry name" value="P-loop containing nucleotide triphosphate hydrolases"/>
    <property type="match status" value="1"/>
</dbReference>
<dbReference type="HAMAP" id="MF_01249">
    <property type="entry name" value="HPr_kinase"/>
    <property type="match status" value="1"/>
</dbReference>
<dbReference type="InterPro" id="IPR003755">
    <property type="entry name" value="HPr(Ser)_kin/Pase"/>
</dbReference>
<dbReference type="InterPro" id="IPR011104">
    <property type="entry name" value="Hpr_kin/Pase_C"/>
</dbReference>
<dbReference type="InterPro" id="IPR011126">
    <property type="entry name" value="Hpr_kin/Pase_Hpr_N"/>
</dbReference>
<dbReference type="InterPro" id="IPR027417">
    <property type="entry name" value="P-loop_NTPase"/>
</dbReference>
<dbReference type="InterPro" id="IPR028979">
    <property type="entry name" value="Ser_kin/Pase_Hpr-like_N_sf"/>
</dbReference>
<dbReference type="NCBIfam" id="TIGR00679">
    <property type="entry name" value="hpr-ser"/>
    <property type="match status" value="1"/>
</dbReference>
<dbReference type="PANTHER" id="PTHR30305:SF1">
    <property type="entry name" value="HPR KINASE_PHOSPHORYLASE"/>
    <property type="match status" value="1"/>
</dbReference>
<dbReference type="PANTHER" id="PTHR30305">
    <property type="entry name" value="PROTEIN YJDM-RELATED"/>
    <property type="match status" value="1"/>
</dbReference>
<dbReference type="Pfam" id="PF07475">
    <property type="entry name" value="Hpr_kinase_C"/>
    <property type="match status" value="1"/>
</dbReference>
<dbReference type="Pfam" id="PF02603">
    <property type="entry name" value="Hpr_kinase_N"/>
    <property type="match status" value="1"/>
</dbReference>
<dbReference type="SUPFAM" id="SSF75138">
    <property type="entry name" value="HprK N-terminal domain-like"/>
    <property type="match status" value="1"/>
</dbReference>
<dbReference type="SUPFAM" id="SSF53795">
    <property type="entry name" value="PEP carboxykinase-like"/>
    <property type="match status" value="1"/>
</dbReference>
<comment type="function">
    <text evidence="1">Catalyzes the ATP- as well as the pyrophosphate-dependent phosphorylation of a specific serine residue in HPr, a phosphocarrier protein of the phosphoenolpyruvate-dependent sugar phosphotransferase system (PTS). HprK/P also catalyzes the pyrophosphate-producing, inorganic phosphate-dependent dephosphorylation (phosphorolysis) of seryl-phosphorylated HPr (P-Ser-HPr).</text>
</comment>
<comment type="catalytic activity">
    <reaction evidence="1">
        <text>[HPr protein]-L-serine + ATP = [HPr protein]-O-phospho-L-serine + ADP + H(+)</text>
        <dbReference type="Rhea" id="RHEA:46600"/>
        <dbReference type="Rhea" id="RHEA-COMP:11602"/>
        <dbReference type="Rhea" id="RHEA-COMP:11603"/>
        <dbReference type="ChEBI" id="CHEBI:15378"/>
        <dbReference type="ChEBI" id="CHEBI:29999"/>
        <dbReference type="ChEBI" id="CHEBI:30616"/>
        <dbReference type="ChEBI" id="CHEBI:83421"/>
        <dbReference type="ChEBI" id="CHEBI:456216"/>
    </reaction>
</comment>
<comment type="catalytic activity">
    <reaction evidence="1">
        <text>[HPr protein]-O-phospho-L-serine + phosphate + H(+) = [HPr protein]-L-serine + diphosphate</text>
        <dbReference type="Rhea" id="RHEA:46604"/>
        <dbReference type="Rhea" id="RHEA-COMP:11602"/>
        <dbReference type="Rhea" id="RHEA-COMP:11603"/>
        <dbReference type="ChEBI" id="CHEBI:15378"/>
        <dbReference type="ChEBI" id="CHEBI:29999"/>
        <dbReference type="ChEBI" id="CHEBI:33019"/>
        <dbReference type="ChEBI" id="CHEBI:43474"/>
        <dbReference type="ChEBI" id="CHEBI:83421"/>
    </reaction>
</comment>
<comment type="cofactor">
    <cofactor evidence="1">
        <name>Mg(2+)</name>
        <dbReference type="ChEBI" id="CHEBI:18420"/>
    </cofactor>
</comment>
<comment type="subunit">
    <text evidence="1">Homohexamer.</text>
</comment>
<comment type="domain">
    <text evidence="1">The Walker A ATP-binding motif also binds Pi and PPi.</text>
</comment>
<comment type="miscellaneous">
    <text evidence="1">Both phosphorylation and phosphorolysis are carried out by the same active site and suggest a common mechanism for both reactions.</text>
</comment>
<comment type="similarity">
    <text evidence="1">Belongs to the HPrK/P family.</text>
</comment>
<proteinExistence type="inferred from homology"/>
<sequence>MPSISVRRLFDDNQYKLQLAWAAGNSGADNRIGVEADKPVLALVGHLNFIHPNQIQVVGLAESEYLNRLESGETGYQFGDLFDISMSLVIVANDLPVSPGLRDYCHKNDIPLLTSKLESPYLMDVLRIYLQRTLAASSVKHGVFLDVFEIGVLITGHSGLGKSELALELISRGHSLIADDAVELFRIGPETLEGRCSPMLRDFLEVRGLGILNIRHIFGETSIRPKKILQLIINLVEADDEYMKQLDRLSIRTETESILNVNVRSVTLPVAVGRNLAVLVEAAVRNYILQLRGKDSTREFLERHQTQLKENEQNHENRPD</sequence>
<accession>B4RK02</accession>
<keyword id="KW-0067">ATP-binding</keyword>
<keyword id="KW-0418">Kinase</keyword>
<keyword id="KW-0460">Magnesium</keyword>
<keyword id="KW-0479">Metal-binding</keyword>
<keyword id="KW-0511">Multifunctional enzyme</keyword>
<keyword id="KW-0547">Nucleotide-binding</keyword>
<keyword id="KW-0723">Serine/threonine-protein kinase</keyword>
<keyword id="KW-0808">Transferase</keyword>
<name>HPRK_NEIG2</name>
<protein>
    <recommendedName>
        <fullName evidence="1">HPr kinase/phosphorylase</fullName>
        <shortName evidence="1">HPrK/P</shortName>
        <ecNumber evidence="1">2.7.11.-</ecNumber>
        <ecNumber evidence="1">2.7.4.-</ecNumber>
    </recommendedName>
    <alternativeName>
        <fullName evidence="1">HPr(Ser) kinase/phosphorylase</fullName>
    </alternativeName>
</protein>
<reference key="1">
    <citation type="journal article" date="2008" name="J. Bacteriol.">
        <title>Complete genome sequence of Neisseria gonorrhoeae NCCP11945.</title>
        <authorList>
            <person name="Chung G.T."/>
            <person name="Yoo J.S."/>
            <person name="Oh H.B."/>
            <person name="Lee Y.S."/>
            <person name="Cha S.H."/>
            <person name="Kim S.J."/>
            <person name="Yoo C.K."/>
        </authorList>
    </citation>
    <scope>NUCLEOTIDE SEQUENCE [LARGE SCALE GENOMIC DNA]</scope>
    <source>
        <strain>NCCP11945</strain>
    </source>
</reference>
<feature type="chain" id="PRO_1000139906" description="HPr kinase/phosphorylase">
    <location>
        <begin position="1"/>
        <end position="320"/>
    </location>
</feature>
<feature type="region of interest" description="Important for the catalytic mechanism of both phosphorylation and dephosphorylation" evidence="1">
    <location>
        <begin position="204"/>
        <end position="213"/>
    </location>
</feature>
<feature type="region of interest" description="Important for the catalytic mechanism of dephosphorylation" evidence="1">
    <location>
        <begin position="269"/>
        <end position="274"/>
    </location>
</feature>
<feature type="active site" evidence="1">
    <location>
        <position position="141"/>
    </location>
</feature>
<feature type="active site" evidence="1">
    <location>
        <position position="162"/>
    </location>
</feature>
<feature type="active site" description="Proton acceptor; for phosphorylation activity. Proton donor; for dephosphorylation activity" evidence="1">
    <location>
        <position position="180"/>
    </location>
</feature>
<feature type="active site" evidence="1">
    <location>
        <position position="248"/>
    </location>
</feature>
<feature type="binding site" evidence="1">
    <location>
        <begin position="156"/>
        <end position="163"/>
    </location>
    <ligand>
        <name>ATP</name>
        <dbReference type="ChEBI" id="CHEBI:30616"/>
    </ligand>
</feature>
<feature type="binding site" evidence="1">
    <location>
        <position position="163"/>
    </location>
    <ligand>
        <name>Mg(2+)</name>
        <dbReference type="ChEBI" id="CHEBI:18420"/>
    </ligand>
</feature>
<feature type="binding site" evidence="1">
    <location>
        <position position="205"/>
    </location>
    <ligand>
        <name>Mg(2+)</name>
        <dbReference type="ChEBI" id="CHEBI:18420"/>
    </ligand>
</feature>
<evidence type="ECO:0000255" key="1">
    <source>
        <dbReference type="HAMAP-Rule" id="MF_01249"/>
    </source>
</evidence>
<gene>
    <name evidence="1" type="primary">hprK</name>
    <name type="ordered locus">NGK_0462</name>
</gene>